<keyword id="KW-0560">Oxidoreductase</keyword>
<keyword id="KW-0819">tRNA processing</keyword>
<proteinExistence type="inferred from homology"/>
<gene>
    <name evidence="1" type="primary">trhO</name>
    <name type="ordered locus">BCG9842_B3469</name>
</gene>
<sequence>MATTKPYRVLLYYMYTTIENPEEFAAEHLEFCNSLELKGRILVAKEGINGTCSGTVEQTEKYMEAMNNDPRFDGIVFKIDEEEGHAFKKMHVRPRPELVTLRLEDDINPHEITGKYLEPKDFYEAMKQEDTVIIDARNDYEFDLGHFKGAIKPDIESFRELPDWIRENKETLEGKKILTYCTGGIRCEKFSGWLVREGYEDVSQLHGGIVTYGKDPEVQGELWDGQCYVFDERIAVPVNQKEHVIVGKDHFTGEPCERYVNCSNPECNKKILCSEENEAKYLRACSHKCRVSPRNRYVIQHELTEEQVAAALEKIEAGK</sequence>
<name>TRHO_BACC2</name>
<organism>
    <name type="scientific">Bacillus cereus (strain G9842)</name>
    <dbReference type="NCBI Taxonomy" id="405531"/>
    <lineage>
        <taxon>Bacteria</taxon>
        <taxon>Bacillati</taxon>
        <taxon>Bacillota</taxon>
        <taxon>Bacilli</taxon>
        <taxon>Bacillales</taxon>
        <taxon>Bacillaceae</taxon>
        <taxon>Bacillus</taxon>
        <taxon>Bacillus cereus group</taxon>
    </lineage>
</organism>
<reference key="1">
    <citation type="submission" date="2008-10" db="EMBL/GenBank/DDBJ databases">
        <title>Genome sequence of Bacillus cereus G9842.</title>
        <authorList>
            <person name="Dodson R.J."/>
            <person name="Durkin A.S."/>
            <person name="Rosovitz M.J."/>
            <person name="Rasko D.A."/>
            <person name="Hoffmaster A."/>
            <person name="Ravel J."/>
            <person name="Sutton G."/>
        </authorList>
    </citation>
    <scope>NUCLEOTIDE SEQUENCE [LARGE SCALE GENOMIC DNA]</scope>
    <source>
        <strain>G9842</strain>
    </source>
</reference>
<accession>B7IS63</accession>
<dbReference type="EC" id="1.14.-.-" evidence="1"/>
<dbReference type="EMBL" id="CP001186">
    <property type="protein sequence ID" value="ACK97285.1"/>
    <property type="molecule type" value="Genomic_DNA"/>
</dbReference>
<dbReference type="RefSeq" id="WP_000246235.1">
    <property type="nucleotide sequence ID" value="NC_011772.1"/>
</dbReference>
<dbReference type="SMR" id="B7IS63"/>
<dbReference type="KEGG" id="bcg:BCG9842_B3469"/>
<dbReference type="HOGENOM" id="CLU_038878_1_0_9"/>
<dbReference type="Proteomes" id="UP000006744">
    <property type="component" value="Chromosome"/>
</dbReference>
<dbReference type="GO" id="GO:0016705">
    <property type="term" value="F:oxidoreductase activity, acting on paired donors, with incorporation or reduction of molecular oxygen"/>
    <property type="evidence" value="ECO:0007669"/>
    <property type="project" value="UniProtKB-UniRule"/>
</dbReference>
<dbReference type="GO" id="GO:0006400">
    <property type="term" value="P:tRNA modification"/>
    <property type="evidence" value="ECO:0007669"/>
    <property type="project" value="UniProtKB-UniRule"/>
</dbReference>
<dbReference type="CDD" id="cd01518">
    <property type="entry name" value="RHOD_YceA"/>
    <property type="match status" value="1"/>
</dbReference>
<dbReference type="Gene3D" id="3.30.70.100">
    <property type="match status" value="1"/>
</dbReference>
<dbReference type="Gene3D" id="3.40.250.10">
    <property type="entry name" value="Rhodanese-like domain"/>
    <property type="match status" value="1"/>
</dbReference>
<dbReference type="HAMAP" id="MF_00469">
    <property type="entry name" value="TrhO"/>
    <property type="match status" value="1"/>
</dbReference>
<dbReference type="InterPro" id="IPR001763">
    <property type="entry name" value="Rhodanese-like_dom"/>
</dbReference>
<dbReference type="InterPro" id="IPR036873">
    <property type="entry name" value="Rhodanese-like_dom_sf"/>
</dbReference>
<dbReference type="InterPro" id="IPR022111">
    <property type="entry name" value="Rhodanese_C"/>
</dbReference>
<dbReference type="InterPro" id="IPR020936">
    <property type="entry name" value="TrhO"/>
</dbReference>
<dbReference type="InterPro" id="IPR040503">
    <property type="entry name" value="TRHO_N"/>
</dbReference>
<dbReference type="NCBIfam" id="NF001135">
    <property type="entry name" value="PRK00142.1-3"/>
    <property type="match status" value="1"/>
</dbReference>
<dbReference type="PANTHER" id="PTHR43268:SF3">
    <property type="entry name" value="RHODANESE-LIKE DOMAIN-CONTAINING PROTEIN 7-RELATED"/>
    <property type="match status" value="1"/>
</dbReference>
<dbReference type="PANTHER" id="PTHR43268">
    <property type="entry name" value="THIOSULFATE SULFURTRANSFERASE/RHODANESE-LIKE DOMAIN-CONTAINING PROTEIN 2"/>
    <property type="match status" value="1"/>
</dbReference>
<dbReference type="Pfam" id="PF00581">
    <property type="entry name" value="Rhodanese"/>
    <property type="match status" value="1"/>
</dbReference>
<dbReference type="Pfam" id="PF12368">
    <property type="entry name" value="Rhodanese_C"/>
    <property type="match status" value="1"/>
</dbReference>
<dbReference type="Pfam" id="PF17773">
    <property type="entry name" value="UPF0176_N"/>
    <property type="match status" value="1"/>
</dbReference>
<dbReference type="SMART" id="SM00450">
    <property type="entry name" value="RHOD"/>
    <property type="match status" value="1"/>
</dbReference>
<dbReference type="SUPFAM" id="SSF52821">
    <property type="entry name" value="Rhodanese/Cell cycle control phosphatase"/>
    <property type="match status" value="1"/>
</dbReference>
<dbReference type="PROSITE" id="PS50206">
    <property type="entry name" value="RHODANESE_3"/>
    <property type="match status" value="1"/>
</dbReference>
<feature type="chain" id="PRO_1000200340" description="tRNA uridine(34) hydroxylase">
    <location>
        <begin position="1"/>
        <end position="319"/>
    </location>
</feature>
<feature type="domain" description="Rhodanese" evidence="1">
    <location>
        <begin position="127"/>
        <end position="221"/>
    </location>
</feature>
<feature type="active site" description="Cysteine persulfide intermediate" evidence="1">
    <location>
        <position position="181"/>
    </location>
</feature>
<comment type="function">
    <text evidence="1">Catalyzes oxygen-dependent 5-hydroxyuridine (ho5U) modification at position 34 in tRNAs.</text>
</comment>
<comment type="catalytic activity">
    <reaction evidence="1">
        <text>uridine(34) in tRNA + AH2 + O2 = 5-hydroxyuridine(34) in tRNA + A + H2O</text>
        <dbReference type="Rhea" id="RHEA:64224"/>
        <dbReference type="Rhea" id="RHEA-COMP:11727"/>
        <dbReference type="Rhea" id="RHEA-COMP:13381"/>
        <dbReference type="ChEBI" id="CHEBI:13193"/>
        <dbReference type="ChEBI" id="CHEBI:15377"/>
        <dbReference type="ChEBI" id="CHEBI:15379"/>
        <dbReference type="ChEBI" id="CHEBI:17499"/>
        <dbReference type="ChEBI" id="CHEBI:65315"/>
        <dbReference type="ChEBI" id="CHEBI:136877"/>
    </reaction>
</comment>
<comment type="similarity">
    <text evidence="1">Belongs to the TrhO family.</text>
</comment>
<evidence type="ECO:0000255" key="1">
    <source>
        <dbReference type="HAMAP-Rule" id="MF_00469"/>
    </source>
</evidence>
<protein>
    <recommendedName>
        <fullName evidence="1">tRNA uridine(34) hydroxylase</fullName>
        <ecNumber evidence="1">1.14.-.-</ecNumber>
    </recommendedName>
    <alternativeName>
        <fullName evidence="1">tRNA hydroxylation protein O</fullName>
    </alternativeName>
</protein>